<proteinExistence type="inferred from homology"/>
<evidence type="ECO:0000255" key="1">
    <source>
        <dbReference type="HAMAP-Rule" id="MF_01550"/>
    </source>
</evidence>
<protein>
    <recommendedName>
        <fullName evidence="1">Guanosine-5'-triphosphate,3'-diphosphate pyrophosphatase</fullName>
        <ecNumber evidence="1">3.6.1.40</ecNumber>
    </recommendedName>
    <alternativeName>
        <fullName evidence="1">Guanosine pentaphosphate phosphohydrolase</fullName>
    </alternativeName>
    <alternativeName>
        <fullName evidence="1">pppGpp-5'-phosphohydrolase</fullName>
    </alternativeName>
</protein>
<reference key="1">
    <citation type="journal article" date="2006" name="J. Bacteriol.">
        <title>Genome sequence of Aeromonas hydrophila ATCC 7966T: jack of all trades.</title>
        <authorList>
            <person name="Seshadri R."/>
            <person name="Joseph S.W."/>
            <person name="Chopra A.K."/>
            <person name="Sha J."/>
            <person name="Shaw J."/>
            <person name="Graf J."/>
            <person name="Haft D.H."/>
            <person name="Wu M."/>
            <person name="Ren Q."/>
            <person name="Rosovitz M.J."/>
            <person name="Madupu R."/>
            <person name="Tallon L."/>
            <person name="Kim M."/>
            <person name="Jin S."/>
            <person name="Vuong H."/>
            <person name="Stine O.C."/>
            <person name="Ali A."/>
            <person name="Horneman A.J."/>
            <person name="Heidelberg J.F."/>
        </authorList>
    </citation>
    <scope>NUCLEOTIDE SEQUENCE [LARGE SCALE GENOMIC DNA]</scope>
    <source>
        <strain>ATCC 7966 / DSM 30187 / BCRC 13018 / CCUG 14551 / JCM 1027 / KCTC 2358 / NCIMB 9240 / NCTC 8049</strain>
    </source>
</reference>
<name>GPPA_AERHH</name>
<sequence length="496" mass="55133">MHNSPLYAAIDLGSNSFHMLVVREVAGALRTVTKVKRKVRLAAGLDPEFRLSRAAMERGWDCLRLFSEQLQDIPADNIRVVGTATLRLATNVDEFLSEAERVLNHSIEIISGEEEAKTIYEGVSWTSAGEGNRLVIDIGGASTELVIGEHSEAKLLNSLHMGCVTWLNNHFGDGELSEARFKQAIAAAKAVLEKVAEDYRALGWRTCVGASGTVQALQEIMLAQGKSERVTLPKLQELMGQAIACGKLDQLQLEGLAAERLTVFPSGLAILIAIFETLGIESMTLAGGALREGLIYGLLGNNHDCDARDRTADSLINRYQLDKEHAERVRDTAVEAFNQLQPAWRLSKRYGRPILRYAALLHEIGLCIEYKKAPQHAAYIIDNIDMPGFTPAQKKLLSALLFNQRDEFKLEPLEKQGAVTGRQAIRLARILRIALILCMRRTQGTVPRFTLEADEDALTLTLPSGWLDEHYLRASELRFEVERQQKMGWPTRLLEA</sequence>
<gene>
    <name evidence="1" type="primary">gppA</name>
    <name type="ordered locus">AHA_0096</name>
</gene>
<comment type="function">
    <text evidence="1">Catalyzes the conversion of pppGpp to ppGpp. Guanosine pentaphosphate (pppGpp) is a cytoplasmic signaling molecule which together with ppGpp controls the 'stringent response', an adaptive process that allows bacteria to respond to amino acid starvation, resulting in the coordinated regulation of numerous cellular activities.</text>
</comment>
<comment type="catalytic activity">
    <reaction evidence="1">
        <text>guanosine 3'-diphosphate 5'-triphosphate + H2O = guanosine 3',5'-bis(diphosphate) + phosphate + H(+)</text>
        <dbReference type="Rhea" id="RHEA:13073"/>
        <dbReference type="ChEBI" id="CHEBI:15377"/>
        <dbReference type="ChEBI" id="CHEBI:15378"/>
        <dbReference type="ChEBI" id="CHEBI:43474"/>
        <dbReference type="ChEBI" id="CHEBI:77828"/>
        <dbReference type="ChEBI" id="CHEBI:142410"/>
        <dbReference type="EC" id="3.6.1.40"/>
    </reaction>
</comment>
<comment type="pathway">
    <text evidence="1">Purine metabolism; ppGpp biosynthesis; ppGpp from GTP: step 2/2.</text>
</comment>
<comment type="similarity">
    <text evidence="1">Belongs to the GppA/Ppx family. GppA subfamily.</text>
</comment>
<accession>A0KEG8</accession>
<dbReference type="EC" id="3.6.1.40" evidence="1"/>
<dbReference type="EMBL" id="CP000462">
    <property type="protein sequence ID" value="ABK39541.1"/>
    <property type="molecule type" value="Genomic_DNA"/>
</dbReference>
<dbReference type="RefSeq" id="WP_011704128.1">
    <property type="nucleotide sequence ID" value="NC_008570.1"/>
</dbReference>
<dbReference type="RefSeq" id="YP_854621.1">
    <property type="nucleotide sequence ID" value="NC_008570.1"/>
</dbReference>
<dbReference type="SMR" id="A0KEG8"/>
<dbReference type="STRING" id="380703.AHA_0096"/>
<dbReference type="EnsemblBacteria" id="ABK39541">
    <property type="protein sequence ID" value="ABK39541"/>
    <property type="gene ID" value="AHA_0096"/>
</dbReference>
<dbReference type="GeneID" id="4490991"/>
<dbReference type="KEGG" id="aha:AHA_0096"/>
<dbReference type="PATRIC" id="fig|380703.7.peg.88"/>
<dbReference type="eggNOG" id="COG0248">
    <property type="taxonomic scope" value="Bacteria"/>
</dbReference>
<dbReference type="HOGENOM" id="CLU_025908_4_0_6"/>
<dbReference type="OrthoDB" id="9793035at2"/>
<dbReference type="UniPathway" id="UPA00908">
    <property type="reaction ID" value="UER00885"/>
</dbReference>
<dbReference type="Proteomes" id="UP000000756">
    <property type="component" value="Chromosome"/>
</dbReference>
<dbReference type="GO" id="GO:0008894">
    <property type="term" value="F:guanosine-5'-triphosphate,3'-diphosphate diphosphatase activity"/>
    <property type="evidence" value="ECO:0007669"/>
    <property type="project" value="UniProtKB-UniRule"/>
</dbReference>
<dbReference type="GO" id="GO:0015974">
    <property type="term" value="P:guanosine pentaphosphate catabolic process"/>
    <property type="evidence" value="ECO:0007669"/>
    <property type="project" value="InterPro"/>
</dbReference>
<dbReference type="GO" id="GO:0015970">
    <property type="term" value="P:guanosine tetraphosphate biosynthetic process"/>
    <property type="evidence" value="ECO:0007669"/>
    <property type="project" value="UniProtKB-UniRule"/>
</dbReference>
<dbReference type="GO" id="GO:0015949">
    <property type="term" value="P:nucleobase-containing small molecule interconversion"/>
    <property type="evidence" value="ECO:0007669"/>
    <property type="project" value="TreeGrafter"/>
</dbReference>
<dbReference type="CDD" id="cd24117">
    <property type="entry name" value="ASKHA_NBD_EcGppA-like"/>
    <property type="match status" value="1"/>
</dbReference>
<dbReference type="FunFam" id="3.30.420.150:FF:000001">
    <property type="entry name" value="Guanosine-5'-triphosphate,3'-diphosphate pyrophosphatase"/>
    <property type="match status" value="1"/>
</dbReference>
<dbReference type="FunFam" id="3.30.420.40:FF:000023">
    <property type="entry name" value="Guanosine-5'-triphosphate,3'-diphosphate pyrophosphatase"/>
    <property type="match status" value="1"/>
</dbReference>
<dbReference type="Gene3D" id="3.30.420.40">
    <property type="match status" value="1"/>
</dbReference>
<dbReference type="Gene3D" id="3.30.420.150">
    <property type="entry name" value="Exopolyphosphatase. Domain 2"/>
    <property type="match status" value="1"/>
</dbReference>
<dbReference type="Gene3D" id="1.10.3210.10">
    <property type="entry name" value="Hypothetical protein af1432"/>
    <property type="match status" value="1"/>
</dbReference>
<dbReference type="HAMAP" id="MF_01550">
    <property type="entry name" value="GppA"/>
    <property type="match status" value="1"/>
</dbReference>
<dbReference type="InterPro" id="IPR043129">
    <property type="entry name" value="ATPase_NBD"/>
</dbReference>
<dbReference type="InterPro" id="IPR050273">
    <property type="entry name" value="GppA/Ppx_hydrolase"/>
</dbReference>
<dbReference type="InterPro" id="IPR023709">
    <property type="entry name" value="Guo-5TP_3DP_PyrP"/>
</dbReference>
<dbReference type="InterPro" id="IPR048950">
    <property type="entry name" value="Ppx_GppA_C"/>
</dbReference>
<dbReference type="InterPro" id="IPR003695">
    <property type="entry name" value="Ppx_GppA_N"/>
</dbReference>
<dbReference type="InterPro" id="IPR030673">
    <property type="entry name" value="PyroPPase_GppA_Ppx"/>
</dbReference>
<dbReference type="NCBIfam" id="NF008260">
    <property type="entry name" value="PRK11031.1"/>
    <property type="match status" value="1"/>
</dbReference>
<dbReference type="PANTHER" id="PTHR30005">
    <property type="entry name" value="EXOPOLYPHOSPHATASE"/>
    <property type="match status" value="1"/>
</dbReference>
<dbReference type="PANTHER" id="PTHR30005:SF0">
    <property type="entry name" value="RETROGRADE REGULATION PROTEIN 2"/>
    <property type="match status" value="1"/>
</dbReference>
<dbReference type="Pfam" id="PF02541">
    <property type="entry name" value="Ppx-GppA"/>
    <property type="match status" value="1"/>
</dbReference>
<dbReference type="Pfam" id="PF21447">
    <property type="entry name" value="Ppx-GppA_III"/>
    <property type="match status" value="1"/>
</dbReference>
<dbReference type="PIRSF" id="PIRSF001267">
    <property type="entry name" value="Pyrophosphatase_GppA_Ppx"/>
    <property type="match status" value="1"/>
</dbReference>
<dbReference type="SUPFAM" id="SSF53067">
    <property type="entry name" value="Actin-like ATPase domain"/>
    <property type="match status" value="2"/>
</dbReference>
<dbReference type="SUPFAM" id="SSF109604">
    <property type="entry name" value="HD-domain/PDEase-like"/>
    <property type="match status" value="1"/>
</dbReference>
<keyword id="KW-0378">Hydrolase</keyword>
<keyword id="KW-1185">Reference proteome</keyword>
<feature type="chain" id="PRO_0000314491" description="Guanosine-5'-triphosphate,3'-diphosphate pyrophosphatase">
    <location>
        <begin position="1"/>
        <end position="496"/>
    </location>
</feature>
<organism>
    <name type="scientific">Aeromonas hydrophila subsp. hydrophila (strain ATCC 7966 / DSM 30187 / BCRC 13018 / CCUG 14551 / JCM 1027 / KCTC 2358 / NCIMB 9240 / NCTC 8049)</name>
    <dbReference type="NCBI Taxonomy" id="380703"/>
    <lineage>
        <taxon>Bacteria</taxon>
        <taxon>Pseudomonadati</taxon>
        <taxon>Pseudomonadota</taxon>
        <taxon>Gammaproteobacteria</taxon>
        <taxon>Aeromonadales</taxon>
        <taxon>Aeromonadaceae</taxon>
        <taxon>Aeromonas</taxon>
    </lineage>
</organism>